<organism>
    <name type="scientific">Treponema denticola (strain ATCC 35405 / DSM 14222 / CIP 103919 / JCM 8153 / KCTC 15104)</name>
    <dbReference type="NCBI Taxonomy" id="243275"/>
    <lineage>
        <taxon>Bacteria</taxon>
        <taxon>Pseudomonadati</taxon>
        <taxon>Spirochaetota</taxon>
        <taxon>Spirochaetia</taxon>
        <taxon>Spirochaetales</taxon>
        <taxon>Treponemataceae</taxon>
        <taxon>Treponema</taxon>
    </lineage>
</organism>
<keyword id="KW-0378">Hydrolase</keyword>
<keyword id="KW-0460">Magnesium</keyword>
<keyword id="KW-0479">Metal-binding</keyword>
<keyword id="KW-0546">Nucleotide metabolism</keyword>
<keyword id="KW-0547">Nucleotide-binding</keyword>
<keyword id="KW-1185">Reference proteome</keyword>
<sequence length="194" mass="21244">MKIYLASGNVNKKREVQELLPSHTIVLPKDEGIEFDPEETGSTFFENAMIKAKALYHIVKAPVLADDSGLCVDFLNGAPGIHSARYGSIEGEHVSAEAGINKVLSELKGVKDRSARFACCMVCLLDENRFYSVQETCEGHITEAPSGSGGFGYDPIFFVEKFGKTFAELTSEQKNSISHRGRALFSISRFIKGS</sequence>
<dbReference type="EC" id="3.6.1.66" evidence="1"/>
<dbReference type="EMBL" id="AE017226">
    <property type="protein sequence ID" value="AAS12790.1"/>
    <property type="molecule type" value="Genomic_DNA"/>
</dbReference>
<dbReference type="RefSeq" id="NP_972871.1">
    <property type="nucleotide sequence ID" value="NC_002967.9"/>
</dbReference>
<dbReference type="SMR" id="Q73KE7"/>
<dbReference type="STRING" id="243275.TDE_2271"/>
<dbReference type="PaxDb" id="243275-TDE_2271"/>
<dbReference type="GeneID" id="2740021"/>
<dbReference type="KEGG" id="tde:TDE_2271"/>
<dbReference type="PATRIC" id="fig|243275.7.peg.2143"/>
<dbReference type="eggNOG" id="COG0127">
    <property type="taxonomic scope" value="Bacteria"/>
</dbReference>
<dbReference type="HOGENOM" id="CLU_082080_0_2_12"/>
<dbReference type="OrthoDB" id="9807456at2"/>
<dbReference type="Proteomes" id="UP000008212">
    <property type="component" value="Chromosome"/>
</dbReference>
<dbReference type="GO" id="GO:0005829">
    <property type="term" value="C:cytosol"/>
    <property type="evidence" value="ECO:0007669"/>
    <property type="project" value="TreeGrafter"/>
</dbReference>
<dbReference type="GO" id="GO:0035870">
    <property type="term" value="F:dITP diphosphatase activity"/>
    <property type="evidence" value="ECO:0007669"/>
    <property type="project" value="RHEA"/>
</dbReference>
<dbReference type="GO" id="GO:0036220">
    <property type="term" value="F:ITP diphosphatase activity"/>
    <property type="evidence" value="ECO:0007669"/>
    <property type="project" value="UniProtKB-EC"/>
</dbReference>
<dbReference type="GO" id="GO:0046872">
    <property type="term" value="F:metal ion binding"/>
    <property type="evidence" value="ECO:0007669"/>
    <property type="project" value="UniProtKB-KW"/>
</dbReference>
<dbReference type="GO" id="GO:0000166">
    <property type="term" value="F:nucleotide binding"/>
    <property type="evidence" value="ECO:0007669"/>
    <property type="project" value="UniProtKB-KW"/>
</dbReference>
<dbReference type="GO" id="GO:0017111">
    <property type="term" value="F:ribonucleoside triphosphate phosphatase activity"/>
    <property type="evidence" value="ECO:0007669"/>
    <property type="project" value="InterPro"/>
</dbReference>
<dbReference type="GO" id="GO:0036222">
    <property type="term" value="F:XTP diphosphatase activity"/>
    <property type="evidence" value="ECO:0007669"/>
    <property type="project" value="RHEA"/>
</dbReference>
<dbReference type="GO" id="GO:0009117">
    <property type="term" value="P:nucleotide metabolic process"/>
    <property type="evidence" value="ECO:0007669"/>
    <property type="project" value="UniProtKB-KW"/>
</dbReference>
<dbReference type="GO" id="GO:0009146">
    <property type="term" value="P:purine nucleoside triphosphate catabolic process"/>
    <property type="evidence" value="ECO:0007669"/>
    <property type="project" value="UniProtKB-UniRule"/>
</dbReference>
<dbReference type="CDD" id="cd00515">
    <property type="entry name" value="HAM1"/>
    <property type="match status" value="1"/>
</dbReference>
<dbReference type="FunFam" id="3.90.950.10:FF:000001">
    <property type="entry name" value="dITP/XTP pyrophosphatase"/>
    <property type="match status" value="1"/>
</dbReference>
<dbReference type="Gene3D" id="3.90.950.10">
    <property type="match status" value="1"/>
</dbReference>
<dbReference type="HAMAP" id="MF_01405">
    <property type="entry name" value="Non_canon_purine_NTPase"/>
    <property type="match status" value="1"/>
</dbReference>
<dbReference type="InterPro" id="IPR020922">
    <property type="entry name" value="dITP/XTP_pyrophosphatase"/>
</dbReference>
<dbReference type="InterPro" id="IPR029001">
    <property type="entry name" value="ITPase-like_fam"/>
</dbReference>
<dbReference type="InterPro" id="IPR002637">
    <property type="entry name" value="RdgB/HAM1"/>
</dbReference>
<dbReference type="NCBIfam" id="TIGR00042">
    <property type="entry name" value="RdgB/HAM1 family non-canonical purine NTP pyrophosphatase"/>
    <property type="match status" value="1"/>
</dbReference>
<dbReference type="PANTHER" id="PTHR11067:SF9">
    <property type="entry name" value="INOSINE TRIPHOSPHATE PYROPHOSPHATASE"/>
    <property type="match status" value="1"/>
</dbReference>
<dbReference type="PANTHER" id="PTHR11067">
    <property type="entry name" value="INOSINE TRIPHOSPHATE PYROPHOSPHATASE/HAM1 PROTEIN"/>
    <property type="match status" value="1"/>
</dbReference>
<dbReference type="Pfam" id="PF01725">
    <property type="entry name" value="Ham1p_like"/>
    <property type="match status" value="1"/>
</dbReference>
<dbReference type="SUPFAM" id="SSF52972">
    <property type="entry name" value="ITPase-like"/>
    <property type="match status" value="1"/>
</dbReference>
<evidence type="ECO:0000255" key="1">
    <source>
        <dbReference type="HAMAP-Rule" id="MF_01405"/>
    </source>
</evidence>
<reference key="1">
    <citation type="journal article" date="2004" name="Proc. Natl. Acad. Sci. U.S.A.">
        <title>Comparison of the genome of the oral pathogen Treponema denticola with other spirochete genomes.</title>
        <authorList>
            <person name="Seshadri R."/>
            <person name="Myers G.S.A."/>
            <person name="Tettelin H."/>
            <person name="Eisen J.A."/>
            <person name="Heidelberg J.F."/>
            <person name="Dodson R.J."/>
            <person name="Davidsen T.M."/>
            <person name="DeBoy R.T."/>
            <person name="Fouts D.E."/>
            <person name="Haft D.H."/>
            <person name="Selengut J."/>
            <person name="Ren Q."/>
            <person name="Brinkac L.M."/>
            <person name="Madupu R."/>
            <person name="Kolonay J.F."/>
            <person name="Durkin S.A."/>
            <person name="Daugherty S.C."/>
            <person name="Shetty J."/>
            <person name="Shvartsbeyn A."/>
            <person name="Gebregeorgis E."/>
            <person name="Geer K."/>
            <person name="Tsegaye G."/>
            <person name="Malek J.A."/>
            <person name="Ayodeji B."/>
            <person name="Shatsman S."/>
            <person name="McLeod M.P."/>
            <person name="Smajs D."/>
            <person name="Howell J.K."/>
            <person name="Pal S."/>
            <person name="Amin A."/>
            <person name="Vashisth P."/>
            <person name="McNeill T.Z."/>
            <person name="Xiang Q."/>
            <person name="Sodergren E."/>
            <person name="Baca E."/>
            <person name="Weinstock G.M."/>
            <person name="Norris S.J."/>
            <person name="Fraser C.M."/>
            <person name="Paulsen I.T."/>
        </authorList>
    </citation>
    <scope>NUCLEOTIDE SEQUENCE [LARGE SCALE GENOMIC DNA]</scope>
    <source>
        <strain>ATCC 35405 / DSM 14222 / CIP 103919 / JCM 8153 / KCTC 15104</strain>
    </source>
</reference>
<feature type="chain" id="PRO_0000178256" description="dITP/XTP pyrophosphatase">
    <location>
        <begin position="1"/>
        <end position="194"/>
    </location>
</feature>
<feature type="active site" description="Proton acceptor" evidence="1">
    <location>
        <position position="67"/>
    </location>
</feature>
<feature type="binding site" evidence="1">
    <location>
        <begin position="7"/>
        <end position="12"/>
    </location>
    <ligand>
        <name>substrate</name>
    </ligand>
</feature>
<feature type="binding site" evidence="1">
    <location>
        <position position="38"/>
    </location>
    <ligand>
        <name>Mg(2+)</name>
        <dbReference type="ChEBI" id="CHEBI:18420"/>
    </ligand>
</feature>
<feature type="binding site" evidence="1">
    <location>
        <position position="67"/>
    </location>
    <ligand>
        <name>Mg(2+)</name>
        <dbReference type="ChEBI" id="CHEBI:18420"/>
    </ligand>
</feature>
<feature type="binding site" evidence="1">
    <location>
        <position position="68"/>
    </location>
    <ligand>
        <name>substrate</name>
    </ligand>
</feature>
<feature type="binding site" evidence="1">
    <location>
        <begin position="151"/>
        <end position="154"/>
    </location>
    <ligand>
        <name>substrate</name>
    </ligand>
</feature>
<feature type="binding site" evidence="1">
    <location>
        <position position="174"/>
    </location>
    <ligand>
        <name>substrate</name>
    </ligand>
</feature>
<feature type="binding site" evidence="1">
    <location>
        <begin position="179"/>
        <end position="180"/>
    </location>
    <ligand>
        <name>substrate</name>
    </ligand>
</feature>
<comment type="function">
    <text evidence="1">Pyrophosphatase that catalyzes the hydrolysis of nucleoside triphosphates to their monophosphate derivatives, with a high preference for the non-canonical purine nucleotides XTP (xanthosine triphosphate), dITP (deoxyinosine triphosphate) and ITP. Seems to function as a house-cleaning enzyme that removes non-canonical purine nucleotides from the nucleotide pool, thus preventing their incorporation into DNA/RNA and avoiding chromosomal lesions.</text>
</comment>
<comment type="catalytic activity">
    <reaction evidence="1">
        <text>XTP + H2O = XMP + diphosphate + H(+)</text>
        <dbReference type="Rhea" id="RHEA:28610"/>
        <dbReference type="ChEBI" id="CHEBI:15377"/>
        <dbReference type="ChEBI" id="CHEBI:15378"/>
        <dbReference type="ChEBI" id="CHEBI:33019"/>
        <dbReference type="ChEBI" id="CHEBI:57464"/>
        <dbReference type="ChEBI" id="CHEBI:61314"/>
        <dbReference type="EC" id="3.6.1.66"/>
    </reaction>
</comment>
<comment type="catalytic activity">
    <reaction evidence="1">
        <text>dITP + H2O = dIMP + diphosphate + H(+)</text>
        <dbReference type="Rhea" id="RHEA:28342"/>
        <dbReference type="ChEBI" id="CHEBI:15377"/>
        <dbReference type="ChEBI" id="CHEBI:15378"/>
        <dbReference type="ChEBI" id="CHEBI:33019"/>
        <dbReference type="ChEBI" id="CHEBI:61194"/>
        <dbReference type="ChEBI" id="CHEBI:61382"/>
        <dbReference type="EC" id="3.6.1.66"/>
    </reaction>
</comment>
<comment type="catalytic activity">
    <reaction evidence="1">
        <text>ITP + H2O = IMP + diphosphate + H(+)</text>
        <dbReference type="Rhea" id="RHEA:29399"/>
        <dbReference type="ChEBI" id="CHEBI:15377"/>
        <dbReference type="ChEBI" id="CHEBI:15378"/>
        <dbReference type="ChEBI" id="CHEBI:33019"/>
        <dbReference type="ChEBI" id="CHEBI:58053"/>
        <dbReference type="ChEBI" id="CHEBI:61402"/>
        <dbReference type="EC" id="3.6.1.66"/>
    </reaction>
</comment>
<comment type="cofactor">
    <cofactor evidence="1">
        <name>Mg(2+)</name>
        <dbReference type="ChEBI" id="CHEBI:18420"/>
    </cofactor>
    <text evidence="1">Binds 1 Mg(2+) ion per subunit.</text>
</comment>
<comment type="subunit">
    <text evidence="1">Homodimer.</text>
</comment>
<comment type="similarity">
    <text evidence="1">Belongs to the HAM1 NTPase family.</text>
</comment>
<protein>
    <recommendedName>
        <fullName evidence="1">dITP/XTP pyrophosphatase</fullName>
        <ecNumber evidence="1">3.6.1.66</ecNumber>
    </recommendedName>
    <alternativeName>
        <fullName evidence="1">Non-canonical purine NTP pyrophosphatase</fullName>
    </alternativeName>
    <alternativeName>
        <fullName evidence="1">Non-standard purine NTP pyrophosphatase</fullName>
    </alternativeName>
    <alternativeName>
        <fullName evidence="1">Nucleoside-triphosphate diphosphatase</fullName>
    </alternativeName>
    <alternativeName>
        <fullName evidence="1">Nucleoside-triphosphate pyrophosphatase</fullName>
        <shortName evidence="1">NTPase</shortName>
    </alternativeName>
</protein>
<proteinExistence type="inferred from homology"/>
<name>IXTPA_TREDE</name>
<gene>
    <name type="ordered locus">TDE_2271</name>
</gene>
<accession>Q73KE7</accession>